<name>SAU24_ARATH</name>
<proteinExistence type="evidence at transcript level"/>
<evidence type="ECO:0000250" key="1">
    <source>
        <dbReference type="UniProtKB" id="Q9FJG1"/>
    </source>
</evidence>
<evidence type="ECO:0000269" key="2">
    <source>
    </source>
</evidence>
<evidence type="ECO:0000303" key="3">
    <source>
    </source>
</evidence>
<evidence type="ECO:0000305" key="4"/>
<evidence type="ECO:0000312" key="5">
    <source>
        <dbReference type="Araport" id="AT5G18080"/>
    </source>
</evidence>
<evidence type="ECO:0000312" key="6">
    <source>
        <dbReference type="EMBL" id="BAB09466.1"/>
    </source>
</evidence>
<protein>
    <recommendedName>
        <fullName evidence="4">Auxin-responsive protein SAUR24</fullName>
    </recommendedName>
    <alternativeName>
        <fullName evidence="3">Protein SMALL AUXIN UP RNA 24</fullName>
    </alternativeName>
</protein>
<feature type="chain" id="PRO_0000433066" description="Auxin-responsive protein SAUR24">
    <location>
        <begin position="1"/>
        <end position="90"/>
    </location>
</feature>
<sequence length="90" mass="9781">MAFVRSLLGAKKILSRSTGAGSAAPKGFLAVYVGESQKKRYLVPVSYLNQPSFQALLSKSEEEFGFDHPMGGLTIPCPEDTFINVTSRLQ</sequence>
<keyword id="KW-0927">Auxin signaling pathway</keyword>
<keyword id="KW-1003">Cell membrane</keyword>
<keyword id="KW-0217">Developmental protein</keyword>
<keyword id="KW-0341">Growth regulation</keyword>
<keyword id="KW-0472">Membrane</keyword>
<keyword id="KW-1185">Reference proteome</keyword>
<reference key="1">
    <citation type="journal article" date="1998" name="DNA Res.">
        <title>Structural analysis of Arabidopsis thaliana chromosome 5. VI. Sequence features of the regions of 1,367,185 bp covered by 19 physically assigned P1 and TAC clones.</title>
        <authorList>
            <person name="Kotani H."/>
            <person name="Nakamura Y."/>
            <person name="Sato S."/>
            <person name="Asamizu E."/>
            <person name="Kaneko T."/>
            <person name="Miyajima N."/>
            <person name="Tabata S."/>
        </authorList>
    </citation>
    <scope>NUCLEOTIDE SEQUENCE [LARGE SCALE GENOMIC DNA]</scope>
    <source>
        <strain>cv. Columbia</strain>
    </source>
</reference>
<reference key="2">
    <citation type="journal article" date="2017" name="Plant J.">
        <title>Araport11: a complete reannotation of the Arabidopsis thaliana reference genome.</title>
        <authorList>
            <person name="Cheng C.Y."/>
            <person name="Krishnakumar V."/>
            <person name="Chan A.P."/>
            <person name="Thibaud-Nissen F."/>
            <person name="Schobel S."/>
            <person name="Town C.D."/>
        </authorList>
    </citation>
    <scope>GENOME REANNOTATION</scope>
    <source>
        <strain>cv. Columbia</strain>
    </source>
</reference>
<reference key="3">
    <citation type="journal article" date="2002" name="Plant Mol. Biol.">
        <title>Auxin-responsive gene expression: genes, promoters and regulatory factors.</title>
        <authorList>
            <person name="Hagen G."/>
            <person name="Guilfoyle T.J."/>
        </authorList>
    </citation>
    <scope>GENE FAMILY</scope>
    <scope>NOMENCLATURE</scope>
</reference>
<reference key="4">
    <citation type="journal article" date="2012" name="Plant J.">
        <title>The SAUR19 subfamily of SMALL AUXIN UP RNA genes promote cell expansion.</title>
        <authorList>
            <person name="Spartz A.K."/>
            <person name="Lee S.H."/>
            <person name="Wenger J.P."/>
            <person name="Gonzalez N."/>
            <person name="Itoh H."/>
            <person name="Inze D."/>
            <person name="Peer W.A."/>
            <person name="Murphy A.S."/>
            <person name="Overvoorde P.J."/>
            <person name="Gray W.M."/>
        </authorList>
    </citation>
    <scope>INDUCTION BY AUXIN</scope>
</reference>
<organism>
    <name type="scientific">Arabidopsis thaliana</name>
    <name type="common">Mouse-ear cress</name>
    <dbReference type="NCBI Taxonomy" id="3702"/>
    <lineage>
        <taxon>Eukaryota</taxon>
        <taxon>Viridiplantae</taxon>
        <taxon>Streptophyta</taxon>
        <taxon>Embryophyta</taxon>
        <taxon>Tracheophyta</taxon>
        <taxon>Spermatophyta</taxon>
        <taxon>Magnoliopsida</taxon>
        <taxon>eudicotyledons</taxon>
        <taxon>Gunneridae</taxon>
        <taxon>Pentapetalae</taxon>
        <taxon>rosids</taxon>
        <taxon>malvids</taxon>
        <taxon>Brassicales</taxon>
        <taxon>Brassicaceae</taxon>
        <taxon>Camelineae</taxon>
        <taxon>Arabidopsis</taxon>
    </lineage>
</organism>
<gene>
    <name evidence="3" type="primary">SAUR24</name>
    <name evidence="5" type="ordered locus">At5g18080</name>
    <name evidence="6" type="ORF">MRG7.3</name>
</gene>
<comment type="function">
    <text evidence="1">Functions as a positive effector of cell expansion through modulation of auxin transport.</text>
</comment>
<comment type="subcellular location">
    <subcellularLocation>
        <location evidence="1">Cell membrane</location>
        <topology evidence="1">Peripheral membrane protein</topology>
    </subcellularLocation>
</comment>
<comment type="induction">
    <text evidence="2">By auxin.</text>
</comment>
<comment type="similarity">
    <text evidence="4">Belongs to the ARG7 family.</text>
</comment>
<accession>Q9FK62</accession>
<dbReference type="EMBL" id="AB012246">
    <property type="protein sequence ID" value="BAB09466.1"/>
    <property type="molecule type" value="Genomic_DNA"/>
</dbReference>
<dbReference type="EMBL" id="CP002688">
    <property type="protein sequence ID" value="AED92504.1"/>
    <property type="molecule type" value="Genomic_DNA"/>
</dbReference>
<dbReference type="RefSeq" id="NP_001318591.1">
    <property type="nucleotide sequence ID" value="NM_001343535.1"/>
</dbReference>
<dbReference type="SMR" id="Q9FK62"/>
<dbReference type="FunCoup" id="Q9FK62">
    <property type="interactions" value="292"/>
</dbReference>
<dbReference type="STRING" id="3702.Q9FK62"/>
<dbReference type="PaxDb" id="3702-AT5G18080.1"/>
<dbReference type="EnsemblPlants" id="AT5G18080.1">
    <property type="protein sequence ID" value="AT5G18080.1"/>
    <property type="gene ID" value="AT5G18080"/>
</dbReference>
<dbReference type="GeneID" id="28721172"/>
<dbReference type="Gramene" id="AT5G18080.1">
    <property type="protein sequence ID" value="AT5G18080.1"/>
    <property type="gene ID" value="AT5G18080"/>
</dbReference>
<dbReference type="KEGG" id="ath:AT5G18080"/>
<dbReference type="Araport" id="AT5G18080"/>
<dbReference type="TAIR" id="AT5G18080">
    <property type="gene designation" value="SAUR24"/>
</dbReference>
<dbReference type="eggNOG" id="ENOG502STBD">
    <property type="taxonomic scope" value="Eukaryota"/>
</dbReference>
<dbReference type="HOGENOM" id="CLU_098106_3_0_1"/>
<dbReference type="InParanoid" id="Q9FK62"/>
<dbReference type="OMA" id="CEENTFI"/>
<dbReference type="PhylomeDB" id="Q9FK62"/>
<dbReference type="PRO" id="PR:Q9FK62"/>
<dbReference type="Proteomes" id="UP000006548">
    <property type="component" value="Chromosome 5"/>
</dbReference>
<dbReference type="ExpressionAtlas" id="Q9FK62">
    <property type="expression patterns" value="baseline and differential"/>
</dbReference>
<dbReference type="GO" id="GO:0005886">
    <property type="term" value="C:plasma membrane"/>
    <property type="evidence" value="ECO:0007669"/>
    <property type="project" value="UniProtKB-SubCell"/>
</dbReference>
<dbReference type="GO" id="GO:0009734">
    <property type="term" value="P:auxin-activated signaling pathway"/>
    <property type="evidence" value="ECO:0007669"/>
    <property type="project" value="UniProtKB-KW"/>
</dbReference>
<dbReference type="InterPro" id="IPR003676">
    <property type="entry name" value="SAUR_fam"/>
</dbReference>
<dbReference type="PANTHER" id="PTHR31929">
    <property type="entry name" value="SAUR-LIKE AUXIN-RESPONSIVE PROTEIN FAMILY-RELATED"/>
    <property type="match status" value="1"/>
</dbReference>
<dbReference type="Pfam" id="PF02519">
    <property type="entry name" value="Auxin_inducible"/>
    <property type="match status" value="1"/>
</dbReference>